<geneLocation type="chloroplast"/>
<comment type="subcellular location">
    <subcellularLocation>
        <location evidence="1">Plastid</location>
        <location evidence="1">Chloroplast thylakoid membrane</location>
        <topology evidence="1">Single-pass membrane protein</topology>
    </subcellularLocation>
</comment>
<comment type="similarity">
    <text evidence="1">Belongs to the PsaM family.</text>
</comment>
<accession>Q4G371</accession>
<gene>
    <name evidence="1" type="primary">psaM</name>
</gene>
<proteinExistence type="inferred from homology"/>
<reference key="1">
    <citation type="journal article" date="2005" name="DNA Res.">
        <title>The complete plastid genome sequence of the haptophyte Emiliania huxleyi: a comparison to other plastid genomes.</title>
        <authorList>
            <person name="Sanchez-Puerta M.V."/>
            <person name="Bachvaroff T.R."/>
            <person name="Delwiche C.F."/>
        </authorList>
    </citation>
    <scope>NUCLEOTIDE SEQUENCE [GENOMIC DNA]</scope>
    <source>
        <strain>CCMP373 / CSIRO-CS-57 / BT6</strain>
    </source>
</reference>
<organism>
    <name type="scientific">Emiliania huxleyi</name>
    <name type="common">Coccolithophore</name>
    <name type="synonym">Pontosphaera huxleyi</name>
    <dbReference type="NCBI Taxonomy" id="2903"/>
    <lineage>
        <taxon>Eukaryota</taxon>
        <taxon>Haptista</taxon>
        <taxon>Haptophyta</taxon>
        <taxon>Prymnesiophyceae</taxon>
        <taxon>Isochrysidales</taxon>
        <taxon>Noelaerhabdaceae</taxon>
        <taxon>Emiliania</taxon>
    </lineage>
</organism>
<keyword id="KW-0150">Chloroplast</keyword>
<keyword id="KW-0472">Membrane</keyword>
<keyword id="KW-0602">Photosynthesis</keyword>
<keyword id="KW-0603">Photosystem I</keyword>
<keyword id="KW-0934">Plastid</keyword>
<keyword id="KW-0793">Thylakoid</keyword>
<keyword id="KW-0812">Transmembrane</keyword>
<keyword id="KW-1133">Transmembrane helix</keyword>
<protein>
    <recommendedName>
        <fullName evidence="1">Photosystem I reaction center subunit XII</fullName>
    </recommendedName>
    <alternativeName>
        <fullName evidence="1">PSI-M</fullName>
    </alternativeName>
</protein>
<dbReference type="EMBL" id="AY741371">
    <property type="protein sequence ID" value="AAX13895.1"/>
    <property type="molecule type" value="Genomic_DNA"/>
</dbReference>
<dbReference type="RefSeq" id="YP_277396.1">
    <property type="nucleotide sequence ID" value="NC_007288.1"/>
</dbReference>
<dbReference type="SMR" id="Q4G371"/>
<dbReference type="STRING" id="2903.Q4G371"/>
<dbReference type="GeneID" id="3562481"/>
<dbReference type="GO" id="GO:0009535">
    <property type="term" value="C:chloroplast thylakoid membrane"/>
    <property type="evidence" value="ECO:0007669"/>
    <property type="project" value="UniProtKB-SubCell"/>
</dbReference>
<dbReference type="GO" id="GO:0009522">
    <property type="term" value="C:photosystem I"/>
    <property type="evidence" value="ECO:0007669"/>
    <property type="project" value="UniProtKB-KW"/>
</dbReference>
<dbReference type="GO" id="GO:0015979">
    <property type="term" value="P:photosynthesis"/>
    <property type="evidence" value="ECO:0007669"/>
    <property type="project" value="UniProtKB-UniRule"/>
</dbReference>
<dbReference type="HAMAP" id="MF_00828">
    <property type="entry name" value="PSI_PsaM"/>
    <property type="match status" value="1"/>
</dbReference>
<dbReference type="InterPro" id="IPR010010">
    <property type="entry name" value="PSI_PsaM"/>
</dbReference>
<dbReference type="InterPro" id="IPR037279">
    <property type="entry name" value="PSI_PsaM_sf"/>
</dbReference>
<dbReference type="NCBIfam" id="TIGR03053">
    <property type="entry name" value="PS_I_psaM"/>
    <property type="match status" value="1"/>
</dbReference>
<dbReference type="Pfam" id="PF07465">
    <property type="entry name" value="PsaM"/>
    <property type="match status" value="1"/>
</dbReference>
<dbReference type="SUPFAM" id="SSF81548">
    <property type="entry name" value="Subunit XII of photosystem I reaction centre, PsaM"/>
    <property type="match status" value="1"/>
</dbReference>
<name>PSAM_EMIHU</name>
<evidence type="ECO:0000255" key="1">
    <source>
        <dbReference type="HAMAP-Rule" id="MF_00828"/>
    </source>
</evidence>
<sequence length="30" mass="3213">MITDSQIFFALCIALTAAVLAIGLGRQLYV</sequence>
<feature type="chain" id="PRO_0000277409" description="Photosystem I reaction center subunit XII">
    <location>
        <begin position="1"/>
        <end position="30"/>
    </location>
</feature>
<feature type="transmembrane region" description="Helical" evidence="1">
    <location>
        <begin position="5"/>
        <end position="25"/>
    </location>
</feature>